<name>ACSF_SYNSC</name>
<proteinExistence type="inferred from homology"/>
<accession>Q3AK18</accession>
<feature type="chain" id="PRO_1000070556" description="Magnesium-protoporphyrin IX monomethyl ester [oxidative] cyclase">
    <location>
        <begin position="1"/>
        <end position="356"/>
    </location>
</feature>
<evidence type="ECO:0000255" key="1">
    <source>
        <dbReference type="HAMAP-Rule" id="MF_01840"/>
    </source>
</evidence>
<dbReference type="EC" id="1.14.13.81" evidence="1"/>
<dbReference type="EMBL" id="CP000110">
    <property type="protein sequence ID" value="ABB35064.1"/>
    <property type="molecule type" value="Genomic_DNA"/>
</dbReference>
<dbReference type="RefSeq" id="WP_011364283.1">
    <property type="nucleotide sequence ID" value="NC_007516.1"/>
</dbReference>
<dbReference type="SMR" id="Q3AK18"/>
<dbReference type="STRING" id="110662.Syncc9605_1310"/>
<dbReference type="KEGG" id="syd:Syncc9605_1310"/>
<dbReference type="eggNOG" id="COG1633">
    <property type="taxonomic scope" value="Bacteria"/>
</dbReference>
<dbReference type="HOGENOM" id="CLU_048037_0_0_3"/>
<dbReference type="OrthoDB" id="141643at2"/>
<dbReference type="UniPathway" id="UPA00670"/>
<dbReference type="GO" id="GO:0005506">
    <property type="term" value="F:iron ion binding"/>
    <property type="evidence" value="ECO:0007669"/>
    <property type="project" value="UniProtKB-UniRule"/>
</dbReference>
<dbReference type="GO" id="GO:0048529">
    <property type="term" value="F:magnesium-protoporphyrin IX monomethyl ester (oxidative) cyclase activity"/>
    <property type="evidence" value="ECO:0007669"/>
    <property type="project" value="UniProtKB-UniRule"/>
</dbReference>
<dbReference type="GO" id="GO:0036068">
    <property type="term" value="P:light-independent chlorophyll biosynthetic process"/>
    <property type="evidence" value="ECO:0007669"/>
    <property type="project" value="UniProtKB-UniRule"/>
</dbReference>
<dbReference type="GO" id="GO:0015979">
    <property type="term" value="P:photosynthesis"/>
    <property type="evidence" value="ECO:0007669"/>
    <property type="project" value="UniProtKB-UniRule"/>
</dbReference>
<dbReference type="CDD" id="cd01047">
    <property type="entry name" value="ACSF"/>
    <property type="match status" value="1"/>
</dbReference>
<dbReference type="Gene3D" id="1.20.1260.10">
    <property type="match status" value="1"/>
</dbReference>
<dbReference type="HAMAP" id="MF_01840">
    <property type="entry name" value="AcsF"/>
    <property type="match status" value="1"/>
</dbReference>
<dbReference type="InterPro" id="IPR008434">
    <property type="entry name" value="AcsF"/>
</dbReference>
<dbReference type="InterPro" id="IPR012347">
    <property type="entry name" value="Ferritin-like"/>
</dbReference>
<dbReference type="InterPro" id="IPR009078">
    <property type="entry name" value="Ferritin-like_SF"/>
</dbReference>
<dbReference type="InterPro" id="IPR003251">
    <property type="entry name" value="Rr_diiron-bd_dom"/>
</dbReference>
<dbReference type="NCBIfam" id="TIGR02029">
    <property type="entry name" value="AcsF"/>
    <property type="match status" value="1"/>
</dbReference>
<dbReference type="NCBIfam" id="NF010172">
    <property type="entry name" value="PRK13654.1"/>
    <property type="match status" value="1"/>
</dbReference>
<dbReference type="PANTHER" id="PTHR31053">
    <property type="entry name" value="MAGNESIUM-PROTOPORPHYRIN IX MONOMETHYL ESTER [OXIDATIVE] CYCLASE, CHLOROPLASTIC"/>
    <property type="match status" value="1"/>
</dbReference>
<dbReference type="PANTHER" id="PTHR31053:SF2">
    <property type="entry name" value="MAGNESIUM-PROTOPORPHYRIN IX MONOMETHYL ESTER [OXIDATIVE] CYCLASE, CHLOROPLASTIC"/>
    <property type="match status" value="1"/>
</dbReference>
<dbReference type="Pfam" id="PF02915">
    <property type="entry name" value="Rubrerythrin"/>
    <property type="match status" value="1"/>
</dbReference>
<dbReference type="SUPFAM" id="SSF47240">
    <property type="entry name" value="Ferritin-like"/>
    <property type="match status" value="1"/>
</dbReference>
<comment type="function">
    <text evidence="1">Catalyzes the formation of the isocyclic ring in chlorophyll biosynthesis. Mediates the cyclase reaction, which results in the formation of divinylprotochlorophyllide (Pchlide) characteristic of all chlorophylls from magnesium-protoporphyrin IX 13-monomethyl ester (MgPMME).</text>
</comment>
<comment type="catalytic activity">
    <reaction evidence="1">
        <text>Mg-protoporphyrin IX 13-monomethyl ester + 3 NADPH + 3 O2 + 2 H(+) = 3,8-divinyl protochlorophyllide a + 3 NADP(+) + 5 H2O</text>
        <dbReference type="Rhea" id="RHEA:33235"/>
        <dbReference type="ChEBI" id="CHEBI:15377"/>
        <dbReference type="ChEBI" id="CHEBI:15378"/>
        <dbReference type="ChEBI" id="CHEBI:15379"/>
        <dbReference type="ChEBI" id="CHEBI:57783"/>
        <dbReference type="ChEBI" id="CHEBI:58349"/>
        <dbReference type="ChEBI" id="CHEBI:58632"/>
        <dbReference type="ChEBI" id="CHEBI:60491"/>
        <dbReference type="EC" id="1.14.13.81"/>
    </reaction>
</comment>
<comment type="cofactor">
    <cofactor evidence="1">
        <name>Fe cation</name>
        <dbReference type="ChEBI" id="CHEBI:24875"/>
    </cofactor>
</comment>
<comment type="pathway">
    <text evidence="1">Porphyrin-containing compound metabolism; chlorophyll biosynthesis (light-independent).</text>
</comment>
<comment type="similarity">
    <text evidence="1">Belongs to the AcsF family.</text>
</comment>
<reference key="1">
    <citation type="submission" date="2005-07" db="EMBL/GenBank/DDBJ databases">
        <title>Complete sequence of Synechococcus sp. CC9605.</title>
        <authorList>
            <consortium name="US DOE Joint Genome Institute"/>
            <person name="Copeland A."/>
            <person name="Lucas S."/>
            <person name="Lapidus A."/>
            <person name="Barry K."/>
            <person name="Detter J.C."/>
            <person name="Glavina T."/>
            <person name="Hammon N."/>
            <person name="Israni S."/>
            <person name="Pitluck S."/>
            <person name="Schmutz J."/>
            <person name="Martinez M."/>
            <person name="Larimer F."/>
            <person name="Land M."/>
            <person name="Kyrpides N."/>
            <person name="Ivanova N."/>
            <person name="Richardson P."/>
        </authorList>
    </citation>
    <scope>NUCLEOTIDE SEQUENCE [LARGE SCALE GENOMIC DNA]</scope>
    <source>
        <strain>CC9605</strain>
    </source>
</reference>
<organism>
    <name type="scientific">Synechococcus sp. (strain CC9605)</name>
    <dbReference type="NCBI Taxonomy" id="110662"/>
    <lineage>
        <taxon>Bacteria</taxon>
        <taxon>Bacillati</taxon>
        <taxon>Cyanobacteriota</taxon>
        <taxon>Cyanophyceae</taxon>
        <taxon>Synechococcales</taxon>
        <taxon>Synechococcaceae</taxon>
        <taxon>Synechococcus</taxon>
    </lineage>
</organism>
<protein>
    <recommendedName>
        <fullName evidence="1">Magnesium-protoporphyrin IX monomethyl ester [oxidative] cyclase</fullName>
        <shortName evidence="1">Mg-protoporphyrin IX monomethyl ester oxidative cyclase</shortName>
        <ecNumber evidence="1">1.14.13.81</ecNumber>
    </recommendedName>
</protein>
<sequence length="356" mass="41212">MVPPTAVAEGSAVAIKDPVKDTILTPRFYTTDFEAMAAMDLQPNEAELEAICEEFRKDYNRHHFVRNEEFEGAADKLDPETRKVFIEFLEQSCTSEFSGFLLYKELSRRIKAKNPLLAECFAHMARDEARHAGFLNKSMSDFGMQLDLGFLTANKDYTFFKPKFIFYATYLSEKIGYWRYIAIYRHLEKNPDSKIFPIFNFFENWCQDENRHGDFFDALMKAQPDTVRGPIAKLWCRFFLLAVFATMYVRDVARKEFYEALGLDARTYDKMVIEKTNETSARVFPVVLDVNNDKFWTRLERLVANNAALDKADASDAIAPVKLLRKLPFWIGNGAEMAKLFLMPAIDSDRFQPAVR</sequence>
<gene>
    <name evidence="1" type="primary">acsF</name>
    <name type="ordered locus">Syncc9605_1310</name>
</gene>
<keyword id="KW-0149">Chlorophyll biosynthesis</keyword>
<keyword id="KW-0408">Iron</keyword>
<keyword id="KW-0479">Metal-binding</keyword>
<keyword id="KW-0521">NADP</keyword>
<keyword id="KW-0560">Oxidoreductase</keyword>
<keyword id="KW-0602">Photosynthesis</keyword>